<dbReference type="EMBL" id="AK057504">
    <property type="protein sequence ID" value="BAG51922.1"/>
    <property type="molecule type" value="mRNA"/>
</dbReference>
<dbReference type="EMBL" id="AK098819">
    <property type="protein sequence ID" value="BAC05423.1"/>
    <property type="molecule type" value="mRNA"/>
</dbReference>
<dbReference type="EMBL" id="BC021179">
    <property type="protein sequence ID" value="AAH21179.1"/>
    <property type="molecule type" value="mRNA"/>
</dbReference>
<dbReference type="EMBL" id="BC105587">
    <property type="protein sequence ID" value="AAI05588.1"/>
    <property type="molecule type" value="mRNA"/>
</dbReference>
<dbReference type="CCDS" id="CCDS8881.1"/>
<dbReference type="RefSeq" id="NP_653195.2">
    <property type="nucleotide sequence ID" value="NM_144594.3"/>
</dbReference>
<dbReference type="RefSeq" id="XP_016874289.1">
    <property type="nucleotide sequence ID" value="XM_017018800.3"/>
</dbReference>
<dbReference type="RefSeq" id="XP_024304602.1">
    <property type="nucleotide sequence ID" value="XM_024448834.2"/>
</dbReference>
<dbReference type="RefSeq" id="XP_054227054.1">
    <property type="nucleotide sequence ID" value="XM_054371079.1"/>
</dbReference>
<dbReference type="RefSeq" id="XP_054227055.1">
    <property type="nucleotide sequence ID" value="XM_054371080.1"/>
</dbReference>
<dbReference type="SMR" id="Q8WW33"/>
<dbReference type="BioGRID" id="125724">
    <property type="interactions" value="14"/>
</dbReference>
<dbReference type="FunCoup" id="Q8WW33">
    <property type="interactions" value="20"/>
</dbReference>
<dbReference type="IntAct" id="Q8WW33">
    <property type="interactions" value="13"/>
</dbReference>
<dbReference type="STRING" id="9606.ENSP00000446485"/>
<dbReference type="GlyGen" id="Q8WW33">
    <property type="glycosylation" value="2 sites, 1 O-linked glycan (1 site)"/>
</dbReference>
<dbReference type="iPTMnet" id="Q8WW33"/>
<dbReference type="PhosphoSitePlus" id="Q8WW33"/>
<dbReference type="SwissPalm" id="Q8WW33"/>
<dbReference type="BioMuta" id="GTSF1"/>
<dbReference type="DMDM" id="116241359"/>
<dbReference type="jPOST" id="Q8WW33"/>
<dbReference type="MassIVE" id="Q8WW33"/>
<dbReference type="PaxDb" id="9606-ENSP00000446485"/>
<dbReference type="PeptideAtlas" id="Q8WW33"/>
<dbReference type="ProteomicsDB" id="74854"/>
<dbReference type="Pumba" id="Q8WW33"/>
<dbReference type="Antibodypedia" id="48366">
    <property type="antibodies" value="96 antibodies from 18 providers"/>
</dbReference>
<dbReference type="DNASU" id="121355"/>
<dbReference type="Ensembl" id="ENST00000305879.8">
    <property type="protein sequence ID" value="ENSP00000304185.5"/>
    <property type="gene ID" value="ENSG00000170627.11"/>
</dbReference>
<dbReference type="Ensembl" id="ENST00000552397.5">
    <property type="protein sequence ID" value="ENSP00000446485.1"/>
    <property type="gene ID" value="ENSG00000170627.11"/>
</dbReference>
<dbReference type="GeneID" id="121355"/>
<dbReference type="KEGG" id="hsa:121355"/>
<dbReference type="MANE-Select" id="ENST00000305879.8">
    <property type="protein sequence ID" value="ENSP00000304185.5"/>
    <property type="RefSeq nucleotide sequence ID" value="NM_144594.3"/>
    <property type="RefSeq protein sequence ID" value="NP_653195.2"/>
</dbReference>
<dbReference type="UCSC" id="uc001sgb.4">
    <property type="organism name" value="human"/>
</dbReference>
<dbReference type="AGR" id="HGNC:26565"/>
<dbReference type="CTD" id="121355"/>
<dbReference type="DisGeNET" id="121355"/>
<dbReference type="GeneCards" id="GTSF1"/>
<dbReference type="HGNC" id="HGNC:26565">
    <property type="gene designation" value="GTSF1"/>
</dbReference>
<dbReference type="HPA" id="ENSG00000170627">
    <property type="expression patterns" value="Tissue enriched (testis)"/>
</dbReference>
<dbReference type="MalaCards" id="GTSF1"/>
<dbReference type="MIM" id="617484">
    <property type="type" value="gene"/>
</dbReference>
<dbReference type="neXtProt" id="NX_Q8WW33"/>
<dbReference type="OpenTargets" id="ENSG00000170627"/>
<dbReference type="PharmGKB" id="PA162390507"/>
<dbReference type="VEuPathDB" id="HostDB:ENSG00000170627"/>
<dbReference type="eggNOG" id="KOG4376">
    <property type="taxonomic scope" value="Eukaryota"/>
</dbReference>
<dbReference type="GeneTree" id="ENSGT00940000156784"/>
<dbReference type="HOGENOM" id="CLU_108762_0_0_1"/>
<dbReference type="InParanoid" id="Q8WW33"/>
<dbReference type="OMA" id="TANFCGN"/>
<dbReference type="OrthoDB" id="10069248at2759"/>
<dbReference type="PAN-GO" id="Q8WW33">
    <property type="GO annotations" value="0 GO annotations based on evolutionary models"/>
</dbReference>
<dbReference type="PhylomeDB" id="Q8WW33"/>
<dbReference type="TreeFam" id="TF323837"/>
<dbReference type="PathwayCommons" id="Q8WW33"/>
<dbReference type="SignaLink" id="Q8WW33"/>
<dbReference type="BioGRID-ORCS" id="121355">
    <property type="hits" value="9 hits in 1154 CRISPR screens"/>
</dbReference>
<dbReference type="GenomeRNAi" id="121355"/>
<dbReference type="Pharos" id="Q8WW33">
    <property type="development level" value="Tbio"/>
</dbReference>
<dbReference type="PRO" id="PR:Q8WW33"/>
<dbReference type="Proteomes" id="UP000005640">
    <property type="component" value="Chromosome 12"/>
</dbReference>
<dbReference type="RNAct" id="Q8WW33">
    <property type="molecule type" value="protein"/>
</dbReference>
<dbReference type="Bgee" id="ENSG00000170627">
    <property type="expression patterns" value="Expressed in sperm and 112 other cell types or tissues"/>
</dbReference>
<dbReference type="ExpressionAtlas" id="Q8WW33">
    <property type="expression patterns" value="baseline and differential"/>
</dbReference>
<dbReference type="GO" id="GO:0071547">
    <property type="term" value="C:piP-body"/>
    <property type="evidence" value="ECO:0007669"/>
    <property type="project" value="Ensembl"/>
</dbReference>
<dbReference type="GO" id="GO:0000049">
    <property type="term" value="F:tRNA binding"/>
    <property type="evidence" value="ECO:0000314"/>
    <property type="project" value="FlyBase"/>
</dbReference>
<dbReference type="GO" id="GO:0008270">
    <property type="term" value="F:zinc ion binding"/>
    <property type="evidence" value="ECO:0007669"/>
    <property type="project" value="UniProtKB-KW"/>
</dbReference>
<dbReference type="GO" id="GO:0030154">
    <property type="term" value="P:cell differentiation"/>
    <property type="evidence" value="ECO:0007669"/>
    <property type="project" value="UniProtKB-KW"/>
</dbReference>
<dbReference type="GO" id="GO:0140991">
    <property type="term" value="P:piRNA-mediated gene silencing by mRNA destabilization"/>
    <property type="evidence" value="ECO:0007669"/>
    <property type="project" value="Ensembl"/>
</dbReference>
<dbReference type="GO" id="GO:0140965">
    <property type="term" value="P:secondary piRNA processing"/>
    <property type="evidence" value="ECO:0007669"/>
    <property type="project" value="Ensembl"/>
</dbReference>
<dbReference type="GO" id="GO:0007283">
    <property type="term" value="P:spermatogenesis"/>
    <property type="evidence" value="ECO:0007669"/>
    <property type="project" value="UniProtKB-KW"/>
</dbReference>
<dbReference type="InterPro" id="IPR022776">
    <property type="entry name" value="TRM13/UPF0224_CHHC_Znf_dom"/>
</dbReference>
<dbReference type="InterPro" id="IPR051591">
    <property type="entry name" value="UPF0224_FAM112_RNA_Proc"/>
</dbReference>
<dbReference type="InterPro" id="IPR036236">
    <property type="entry name" value="Znf_C2H2_sf"/>
</dbReference>
<dbReference type="PANTHER" id="PTHR21402">
    <property type="entry name" value="GAMETOCYTE SPECIFIC FACTOR 1-RELATED"/>
    <property type="match status" value="1"/>
</dbReference>
<dbReference type="PANTHER" id="PTHR21402:SF9">
    <property type="entry name" value="GAMETOCYTE-SPECIFIC FACTOR 1"/>
    <property type="match status" value="1"/>
</dbReference>
<dbReference type="Pfam" id="PF05253">
    <property type="entry name" value="zf-U11-48K"/>
    <property type="match status" value="2"/>
</dbReference>
<dbReference type="SUPFAM" id="SSF57667">
    <property type="entry name" value="beta-beta-alpha zinc fingers"/>
    <property type="match status" value="1"/>
</dbReference>
<dbReference type="PROSITE" id="PS51800">
    <property type="entry name" value="ZF_CHHC_U11_48K"/>
    <property type="match status" value="2"/>
</dbReference>
<gene>
    <name type="primary">GTSF1</name>
    <name type="synonym">FAM112B</name>
</gene>
<proteinExistence type="evidence at protein level"/>
<keyword id="KW-0963">Cytoplasm</keyword>
<keyword id="KW-0221">Differentiation</keyword>
<keyword id="KW-0479">Metal-binding</keyword>
<keyword id="KW-0597">Phosphoprotein</keyword>
<keyword id="KW-1267">Proteomics identification</keyword>
<keyword id="KW-1185">Reference proteome</keyword>
<keyword id="KW-0677">Repeat</keyword>
<keyword id="KW-0744">Spermatogenesis</keyword>
<keyword id="KW-0862">Zinc</keyword>
<keyword id="KW-0863">Zinc-finger</keyword>
<evidence type="ECO:0000250" key="1">
    <source>
        <dbReference type="UniProtKB" id="Q9DAN6"/>
    </source>
</evidence>
<evidence type="ECO:0000255" key="2">
    <source>
        <dbReference type="PROSITE-ProRule" id="PRU01141"/>
    </source>
</evidence>
<evidence type="ECO:0000305" key="3"/>
<evidence type="ECO:0007744" key="4">
    <source>
    </source>
</evidence>
<reference key="1">
    <citation type="journal article" date="2004" name="Nat. Genet.">
        <title>Complete sequencing and characterization of 21,243 full-length human cDNAs.</title>
        <authorList>
            <person name="Ota T."/>
            <person name="Suzuki Y."/>
            <person name="Nishikawa T."/>
            <person name="Otsuki T."/>
            <person name="Sugiyama T."/>
            <person name="Irie R."/>
            <person name="Wakamatsu A."/>
            <person name="Hayashi K."/>
            <person name="Sato H."/>
            <person name="Nagai K."/>
            <person name="Kimura K."/>
            <person name="Makita H."/>
            <person name="Sekine M."/>
            <person name="Obayashi M."/>
            <person name="Nishi T."/>
            <person name="Shibahara T."/>
            <person name="Tanaka T."/>
            <person name="Ishii S."/>
            <person name="Yamamoto J."/>
            <person name="Saito K."/>
            <person name="Kawai Y."/>
            <person name="Isono Y."/>
            <person name="Nakamura Y."/>
            <person name="Nagahari K."/>
            <person name="Murakami K."/>
            <person name="Yasuda T."/>
            <person name="Iwayanagi T."/>
            <person name="Wagatsuma M."/>
            <person name="Shiratori A."/>
            <person name="Sudo H."/>
            <person name="Hosoiri T."/>
            <person name="Kaku Y."/>
            <person name="Kodaira H."/>
            <person name="Kondo H."/>
            <person name="Sugawara M."/>
            <person name="Takahashi M."/>
            <person name="Kanda K."/>
            <person name="Yokoi T."/>
            <person name="Furuya T."/>
            <person name="Kikkawa E."/>
            <person name="Omura Y."/>
            <person name="Abe K."/>
            <person name="Kamihara K."/>
            <person name="Katsuta N."/>
            <person name="Sato K."/>
            <person name="Tanikawa M."/>
            <person name="Yamazaki M."/>
            <person name="Ninomiya K."/>
            <person name="Ishibashi T."/>
            <person name="Yamashita H."/>
            <person name="Murakawa K."/>
            <person name="Fujimori K."/>
            <person name="Tanai H."/>
            <person name="Kimata M."/>
            <person name="Watanabe M."/>
            <person name="Hiraoka S."/>
            <person name="Chiba Y."/>
            <person name="Ishida S."/>
            <person name="Ono Y."/>
            <person name="Takiguchi S."/>
            <person name="Watanabe S."/>
            <person name="Yosida M."/>
            <person name="Hotuta T."/>
            <person name="Kusano J."/>
            <person name="Kanehori K."/>
            <person name="Takahashi-Fujii A."/>
            <person name="Hara H."/>
            <person name="Tanase T.-O."/>
            <person name="Nomura Y."/>
            <person name="Togiya S."/>
            <person name="Komai F."/>
            <person name="Hara R."/>
            <person name="Takeuchi K."/>
            <person name="Arita M."/>
            <person name="Imose N."/>
            <person name="Musashino K."/>
            <person name="Yuuki H."/>
            <person name="Oshima A."/>
            <person name="Sasaki N."/>
            <person name="Aotsuka S."/>
            <person name="Yoshikawa Y."/>
            <person name="Matsunawa H."/>
            <person name="Ichihara T."/>
            <person name="Shiohata N."/>
            <person name="Sano S."/>
            <person name="Moriya S."/>
            <person name="Momiyama H."/>
            <person name="Satoh N."/>
            <person name="Takami S."/>
            <person name="Terashima Y."/>
            <person name="Suzuki O."/>
            <person name="Nakagawa S."/>
            <person name="Senoh A."/>
            <person name="Mizoguchi H."/>
            <person name="Goto Y."/>
            <person name="Shimizu F."/>
            <person name="Wakebe H."/>
            <person name="Hishigaki H."/>
            <person name="Watanabe T."/>
            <person name="Sugiyama A."/>
            <person name="Takemoto M."/>
            <person name="Kawakami B."/>
            <person name="Yamazaki M."/>
            <person name="Watanabe K."/>
            <person name="Kumagai A."/>
            <person name="Itakura S."/>
            <person name="Fukuzumi Y."/>
            <person name="Fujimori Y."/>
            <person name="Komiyama M."/>
            <person name="Tashiro H."/>
            <person name="Tanigami A."/>
            <person name="Fujiwara T."/>
            <person name="Ono T."/>
            <person name="Yamada K."/>
            <person name="Fujii Y."/>
            <person name="Ozaki K."/>
            <person name="Hirao M."/>
            <person name="Ohmori Y."/>
            <person name="Kawabata A."/>
            <person name="Hikiji T."/>
            <person name="Kobatake N."/>
            <person name="Inagaki H."/>
            <person name="Ikema Y."/>
            <person name="Okamoto S."/>
            <person name="Okitani R."/>
            <person name="Kawakami T."/>
            <person name="Noguchi S."/>
            <person name="Itoh T."/>
            <person name="Shigeta K."/>
            <person name="Senba T."/>
            <person name="Matsumura K."/>
            <person name="Nakajima Y."/>
            <person name="Mizuno T."/>
            <person name="Morinaga M."/>
            <person name="Sasaki M."/>
            <person name="Togashi T."/>
            <person name="Oyama M."/>
            <person name="Hata H."/>
            <person name="Watanabe M."/>
            <person name="Komatsu T."/>
            <person name="Mizushima-Sugano J."/>
            <person name="Satoh T."/>
            <person name="Shirai Y."/>
            <person name="Takahashi Y."/>
            <person name="Nakagawa K."/>
            <person name="Okumura K."/>
            <person name="Nagase T."/>
            <person name="Nomura N."/>
            <person name="Kikuchi H."/>
            <person name="Masuho Y."/>
            <person name="Yamashita R."/>
            <person name="Nakai K."/>
            <person name="Yada T."/>
            <person name="Nakamura Y."/>
            <person name="Ohara O."/>
            <person name="Isogai T."/>
            <person name="Sugano S."/>
        </authorList>
    </citation>
    <scope>NUCLEOTIDE SEQUENCE [LARGE SCALE MRNA]</scope>
    <source>
        <tissue>Testis</tissue>
    </source>
</reference>
<reference key="2">
    <citation type="journal article" date="2004" name="Genome Res.">
        <title>The status, quality, and expansion of the NIH full-length cDNA project: the Mammalian Gene Collection (MGC).</title>
        <authorList>
            <consortium name="The MGC Project Team"/>
        </authorList>
    </citation>
    <scope>NUCLEOTIDE SEQUENCE [LARGE SCALE MRNA]</scope>
    <source>
        <tissue>Testis</tissue>
    </source>
</reference>
<reference key="3">
    <citation type="journal article" date="2008" name="Bioinformatics">
        <title>A novel CHHC Zn-finger domain found in spliceosomal proteins and tRNA modifying enzymes.</title>
        <authorList>
            <person name="Andreeva A."/>
            <person name="Tidow H."/>
        </authorList>
    </citation>
    <scope>DOMAIN CHHC ZINC-FINGER</scope>
</reference>
<reference key="4">
    <citation type="journal article" date="2011" name="BMC Syst. Biol.">
        <title>Initial characterization of the human central proteome.</title>
        <authorList>
            <person name="Burkard T.R."/>
            <person name="Planyavsky M."/>
            <person name="Kaupe I."/>
            <person name="Breitwieser F.P."/>
            <person name="Buerckstuemmer T."/>
            <person name="Bennett K.L."/>
            <person name="Superti-Furga G."/>
            <person name="Colinge J."/>
        </authorList>
    </citation>
    <scope>IDENTIFICATION BY MASS SPECTROMETRY [LARGE SCALE ANALYSIS]</scope>
</reference>
<reference key="5">
    <citation type="journal article" date="2013" name="J. Proteome Res.">
        <title>Toward a comprehensive characterization of a human cancer cell phosphoproteome.</title>
        <authorList>
            <person name="Zhou H."/>
            <person name="Di Palma S."/>
            <person name="Preisinger C."/>
            <person name="Peng M."/>
            <person name="Polat A.N."/>
            <person name="Heck A.J."/>
            <person name="Mohammed S."/>
        </authorList>
    </citation>
    <scope>PHOSPHORYLATION [LARGE SCALE ANALYSIS] AT SER-8</scope>
    <scope>IDENTIFICATION BY MASS SPECTROMETRY [LARGE SCALE ANALYSIS]</scope>
    <source>
        <tissue>Erythroleukemia</tissue>
    </source>
</reference>
<comment type="function">
    <text evidence="1">Required for spermatogenesis and is involved in the suppression of retrotransposon transcription in male germ cells.</text>
</comment>
<comment type="subcellular location">
    <subcellularLocation>
        <location evidence="1">Cytoplasm</location>
    </subcellularLocation>
</comment>
<comment type="similarity">
    <text evidence="3">Belongs to the UPF0224 (FAM112) family.</text>
</comment>
<accession>Q8WW33</accession>
<accession>B3KQ60</accession>
<accession>Q0VGM4</accession>
<accession>Q8N778</accession>
<sequence length="167" mass="19266">MEETYTDSLDPEKLLQCPYDKNHQIRACRFPYHLIKCRKNHPDVASKLATCPFNARHQVPRAEISHHISSCDDRSCIEQDVVNQTRSLRQETLAESTWQCPPCDEDWDKDLWEQTSTPFVWGTTHYSDNNSPASNIVTEHKNNLASGMRVPKSLPYVLPWKNNGNAQ</sequence>
<protein>
    <recommendedName>
        <fullName>Gametocyte-specific factor 1</fullName>
    </recommendedName>
    <alternativeName>
        <fullName>Protein FAM112B</fullName>
    </alternativeName>
</protein>
<organism>
    <name type="scientific">Homo sapiens</name>
    <name type="common">Human</name>
    <dbReference type="NCBI Taxonomy" id="9606"/>
    <lineage>
        <taxon>Eukaryota</taxon>
        <taxon>Metazoa</taxon>
        <taxon>Chordata</taxon>
        <taxon>Craniata</taxon>
        <taxon>Vertebrata</taxon>
        <taxon>Euteleostomi</taxon>
        <taxon>Mammalia</taxon>
        <taxon>Eutheria</taxon>
        <taxon>Euarchontoglires</taxon>
        <taxon>Primates</taxon>
        <taxon>Haplorrhini</taxon>
        <taxon>Catarrhini</taxon>
        <taxon>Hominidae</taxon>
        <taxon>Homo</taxon>
    </lineage>
</organism>
<name>GTSF1_HUMAN</name>
<feature type="chain" id="PRO_0000221621" description="Gametocyte-specific factor 1">
    <location>
        <begin position="1"/>
        <end position="167"/>
    </location>
</feature>
<feature type="zinc finger region" description="CHHC U11-48K-type 1" evidence="2">
    <location>
        <begin position="14"/>
        <end position="41"/>
    </location>
</feature>
<feature type="zinc finger region" description="CHHC U11-48K-type 2" evidence="2">
    <location>
        <begin position="48"/>
        <end position="75"/>
    </location>
</feature>
<feature type="binding site" evidence="2">
    <location>
        <position position="17"/>
    </location>
    <ligand>
        <name>Zn(2+)</name>
        <dbReference type="ChEBI" id="CHEBI:29105"/>
        <label>1</label>
    </ligand>
</feature>
<feature type="binding site" evidence="2">
    <location>
        <position position="23"/>
    </location>
    <ligand>
        <name>Zn(2+)</name>
        <dbReference type="ChEBI" id="CHEBI:29105"/>
        <label>1</label>
    </ligand>
</feature>
<feature type="binding site" evidence="2">
    <location>
        <position position="33"/>
    </location>
    <ligand>
        <name>Zn(2+)</name>
        <dbReference type="ChEBI" id="CHEBI:29105"/>
        <label>1</label>
    </ligand>
</feature>
<feature type="binding site" evidence="2">
    <location>
        <position position="37"/>
    </location>
    <ligand>
        <name>Zn(2+)</name>
        <dbReference type="ChEBI" id="CHEBI:29105"/>
        <label>1</label>
    </ligand>
</feature>
<feature type="binding site" evidence="2">
    <location>
        <position position="51"/>
    </location>
    <ligand>
        <name>Zn(2+)</name>
        <dbReference type="ChEBI" id="CHEBI:29105"/>
        <label>2</label>
    </ligand>
</feature>
<feature type="binding site" evidence="2">
    <location>
        <position position="57"/>
    </location>
    <ligand>
        <name>Zn(2+)</name>
        <dbReference type="ChEBI" id="CHEBI:29105"/>
        <label>2</label>
    </ligand>
</feature>
<feature type="binding site" evidence="2">
    <location>
        <position position="67"/>
    </location>
    <ligand>
        <name>Zn(2+)</name>
        <dbReference type="ChEBI" id="CHEBI:29105"/>
        <label>2</label>
    </ligand>
</feature>
<feature type="binding site" evidence="2">
    <location>
        <position position="71"/>
    </location>
    <ligand>
        <name>Zn(2+)</name>
        <dbReference type="ChEBI" id="CHEBI:29105"/>
        <label>2</label>
    </ligand>
</feature>
<feature type="modified residue" description="Phosphoserine" evidence="4">
    <location>
        <position position="8"/>
    </location>
</feature>
<feature type="sequence conflict" description="In Ref. 2; AAH21179." evidence="3" ref="2">
    <original>V</original>
    <variation>A</variation>
    <location>
        <position position="120"/>
    </location>
</feature>